<protein>
    <recommendedName>
        <fullName>Putative ankyrin repeat protein L23</fullName>
    </recommendedName>
</protein>
<organismHost>
    <name type="scientific">Acanthamoeba polyphaga</name>
    <name type="common">Amoeba</name>
    <dbReference type="NCBI Taxonomy" id="5757"/>
</organismHost>
<sequence>MSQKIYFKITNDKECHNGFQYKDGLNILQEKFNDNLEDSCVPGRLYFTKPKHILKYLDYGIYLREIYLPTDNPDFKMIRDPTGDKYGANMIILGERRDLRNPDTWKYMVSKGVDIRAEDDYAVKWASKNGHLKVVEYLVSLGADIKSDGDYAVRWASENGHIDVVKYLVSQNADIRADNDYAVKWASSNGHLEVVKYLVSQGANIREQNDYAIRLASQYGHLEVVKYLISLGADIRADNDCAVRLASENGHIEIVNYLISQGADIRAKK</sequence>
<gene>
    <name type="ordered locus">MIMI_L23</name>
</gene>
<organism>
    <name type="scientific">Acanthamoeba polyphaga mimivirus</name>
    <name type="common">APMV</name>
    <dbReference type="NCBI Taxonomy" id="212035"/>
    <lineage>
        <taxon>Viruses</taxon>
        <taxon>Varidnaviria</taxon>
        <taxon>Bamfordvirae</taxon>
        <taxon>Nucleocytoviricota</taxon>
        <taxon>Megaviricetes</taxon>
        <taxon>Imitervirales</taxon>
        <taxon>Mimiviridae</taxon>
        <taxon>Megamimivirinae</taxon>
        <taxon>Mimivirus</taxon>
        <taxon>Mimivirus bradfordmassiliense</taxon>
    </lineage>
</organism>
<accession>Q5UPA2</accession>
<reference key="1">
    <citation type="journal article" date="2004" name="Science">
        <title>The 1.2-megabase genome sequence of Mimivirus.</title>
        <authorList>
            <person name="Raoult D."/>
            <person name="Audic S."/>
            <person name="Robert C."/>
            <person name="Abergel C."/>
            <person name="Renesto P."/>
            <person name="Ogata H."/>
            <person name="La Scola B."/>
            <person name="Susan M."/>
            <person name="Claverie J.-M."/>
        </authorList>
    </citation>
    <scope>NUCLEOTIDE SEQUENCE [LARGE SCALE GENOMIC DNA]</scope>
    <source>
        <strain>Rowbotham-Bradford</strain>
    </source>
</reference>
<dbReference type="EMBL" id="AY653733">
    <property type="protein sequence ID" value="AAV50298.1"/>
    <property type="molecule type" value="Genomic_DNA"/>
</dbReference>
<dbReference type="SMR" id="Q5UPA2"/>
<dbReference type="KEGG" id="vg:9924601"/>
<dbReference type="OrthoDB" id="30338at10239"/>
<dbReference type="Proteomes" id="UP000001134">
    <property type="component" value="Genome"/>
</dbReference>
<dbReference type="Gene3D" id="1.25.40.20">
    <property type="entry name" value="Ankyrin repeat-containing domain"/>
    <property type="match status" value="2"/>
</dbReference>
<dbReference type="InterPro" id="IPR002110">
    <property type="entry name" value="Ankyrin_rpt"/>
</dbReference>
<dbReference type="InterPro" id="IPR036770">
    <property type="entry name" value="Ankyrin_rpt-contain_sf"/>
</dbReference>
<dbReference type="PANTHER" id="PTHR24188">
    <property type="entry name" value="ANKYRIN REPEAT PROTEIN"/>
    <property type="match status" value="1"/>
</dbReference>
<dbReference type="PANTHER" id="PTHR24188:SF29">
    <property type="entry name" value="GH09064P"/>
    <property type="match status" value="1"/>
</dbReference>
<dbReference type="Pfam" id="PF12796">
    <property type="entry name" value="Ank_2"/>
    <property type="match status" value="2"/>
</dbReference>
<dbReference type="SMART" id="SM00248">
    <property type="entry name" value="ANK"/>
    <property type="match status" value="5"/>
</dbReference>
<dbReference type="SUPFAM" id="SSF48403">
    <property type="entry name" value="Ankyrin repeat"/>
    <property type="match status" value="1"/>
</dbReference>
<dbReference type="PROSITE" id="PS50297">
    <property type="entry name" value="ANK_REP_REGION"/>
    <property type="match status" value="1"/>
</dbReference>
<dbReference type="PROSITE" id="PS50088">
    <property type="entry name" value="ANK_REPEAT"/>
    <property type="match status" value="5"/>
</dbReference>
<feature type="chain" id="PRO_0000067135" description="Putative ankyrin repeat protein L23">
    <location>
        <begin position="1"/>
        <end position="269"/>
    </location>
</feature>
<feature type="repeat" description="ANK 1">
    <location>
        <begin position="118"/>
        <end position="147"/>
    </location>
</feature>
<feature type="repeat" description="ANK 2">
    <location>
        <begin position="148"/>
        <end position="177"/>
    </location>
</feature>
<feature type="repeat" description="ANK 3">
    <location>
        <begin position="179"/>
        <end position="207"/>
    </location>
</feature>
<feature type="repeat" description="ANK 4">
    <location>
        <begin position="208"/>
        <end position="237"/>
    </location>
</feature>
<feature type="repeat" description="ANK 5">
    <location>
        <begin position="238"/>
        <end position="267"/>
    </location>
</feature>
<proteinExistence type="predicted"/>
<keyword id="KW-0040">ANK repeat</keyword>
<keyword id="KW-1185">Reference proteome</keyword>
<keyword id="KW-0677">Repeat</keyword>
<name>YL023_MIMIV</name>